<organism>
    <name type="scientific">Yersinia pseudotuberculosis serotype IB (strain PB1/+)</name>
    <dbReference type="NCBI Taxonomy" id="502801"/>
    <lineage>
        <taxon>Bacteria</taxon>
        <taxon>Pseudomonadati</taxon>
        <taxon>Pseudomonadota</taxon>
        <taxon>Gammaproteobacteria</taxon>
        <taxon>Enterobacterales</taxon>
        <taxon>Yersiniaceae</taxon>
        <taxon>Yersinia</taxon>
    </lineage>
</organism>
<feature type="chain" id="PRO_1000092323" description="N-acetylmuramic acid 6-phosphate etherase">
    <location>
        <begin position="1"/>
        <end position="295"/>
    </location>
</feature>
<feature type="domain" description="SIS" evidence="1">
    <location>
        <begin position="55"/>
        <end position="218"/>
    </location>
</feature>
<feature type="active site" description="Proton donor" evidence="1">
    <location>
        <position position="83"/>
    </location>
</feature>
<feature type="active site" evidence="1">
    <location>
        <position position="114"/>
    </location>
</feature>
<sequence length="295" mass="30902">MSLGALISESRNPATMELDKLSTLAMLTCINDEDRKVPDAIRLVLPAVAQAVDLAADALKQGGRLIYLGAGTSGRLGVLDASECPPTFGVPHGMVIGLIAGGPGALLKAVEGAEDDIALGMRDLQDLQLTATDMVVGLAASGRTPYVIGALRYARELGCPTAAISCNPDSPIAQEAQVAISPVVGPEALTGSTRMKSGTAQKLVLNMLSTGAMVKLGKVYQNLMVDVKATNVKLVDRACRIVVEATGVSRAEAEHALRQTDFEVKPAILMLLKGVSAEQARQDLRQHHGYLRAAL</sequence>
<keyword id="KW-0119">Carbohydrate metabolism</keyword>
<keyword id="KW-0456">Lyase</keyword>
<protein>
    <recommendedName>
        <fullName evidence="1">N-acetylmuramic acid 6-phosphate etherase</fullName>
        <shortName evidence="1">MurNAc-6-P etherase</shortName>
        <ecNumber evidence="1">4.2.1.126</ecNumber>
    </recommendedName>
    <alternativeName>
        <fullName evidence="1">N-acetylmuramic acid 6-phosphate hydrolase</fullName>
    </alternativeName>
    <alternativeName>
        <fullName evidence="1">N-acetylmuramic acid 6-phosphate lyase</fullName>
    </alternativeName>
</protein>
<evidence type="ECO:0000255" key="1">
    <source>
        <dbReference type="HAMAP-Rule" id="MF_00068"/>
    </source>
</evidence>
<name>MURQ_YERPB</name>
<proteinExistence type="inferred from homology"/>
<accession>B2KA40</accession>
<reference key="1">
    <citation type="submission" date="2008-04" db="EMBL/GenBank/DDBJ databases">
        <title>Complete sequence of Yersinia pseudotuberculosis PB1/+.</title>
        <authorList>
            <person name="Copeland A."/>
            <person name="Lucas S."/>
            <person name="Lapidus A."/>
            <person name="Glavina del Rio T."/>
            <person name="Dalin E."/>
            <person name="Tice H."/>
            <person name="Bruce D."/>
            <person name="Goodwin L."/>
            <person name="Pitluck S."/>
            <person name="Munk A.C."/>
            <person name="Brettin T."/>
            <person name="Detter J.C."/>
            <person name="Han C."/>
            <person name="Tapia R."/>
            <person name="Schmutz J."/>
            <person name="Larimer F."/>
            <person name="Land M."/>
            <person name="Hauser L."/>
            <person name="Challacombe J.F."/>
            <person name="Green L."/>
            <person name="Lindler L.E."/>
            <person name="Nikolich M.P."/>
            <person name="Richardson P."/>
        </authorList>
    </citation>
    <scope>NUCLEOTIDE SEQUENCE [LARGE SCALE GENOMIC DNA]</scope>
    <source>
        <strain>PB1/+</strain>
    </source>
</reference>
<comment type="function">
    <text evidence="1">Specifically catalyzes the cleavage of the D-lactyl ether substituent of MurNAc 6-phosphate, producing GlcNAc 6-phosphate and D-lactate. Together with AnmK, is also required for the utilization of anhydro-N-acetylmuramic acid (anhMurNAc) either imported from the medium or derived from its own cell wall murein, and thus plays a role in cell wall recycling.</text>
</comment>
<comment type="catalytic activity">
    <reaction evidence="1">
        <text>N-acetyl-D-muramate 6-phosphate + H2O = N-acetyl-D-glucosamine 6-phosphate + (R)-lactate</text>
        <dbReference type="Rhea" id="RHEA:26410"/>
        <dbReference type="ChEBI" id="CHEBI:15377"/>
        <dbReference type="ChEBI" id="CHEBI:16004"/>
        <dbReference type="ChEBI" id="CHEBI:57513"/>
        <dbReference type="ChEBI" id="CHEBI:58722"/>
        <dbReference type="EC" id="4.2.1.126"/>
    </reaction>
</comment>
<comment type="pathway">
    <text evidence="1">Amino-sugar metabolism; 1,6-anhydro-N-acetylmuramate degradation.</text>
</comment>
<comment type="pathway">
    <text evidence="1">Amino-sugar metabolism; N-acetylmuramate degradation.</text>
</comment>
<comment type="pathway">
    <text evidence="1">Cell wall biogenesis; peptidoglycan recycling.</text>
</comment>
<comment type="subunit">
    <text evidence="1">Homodimer.</text>
</comment>
<comment type="induction">
    <text evidence="1">Induced by MurNAc 6-phosphate that releases the repressor MurR from the DNA. Repressed by MurR in the absence of MurNAc 6-phosphate.</text>
</comment>
<comment type="miscellaneous">
    <text evidence="1">A lyase-type mechanism (elimination/hydration) is suggested for the cleavage of the lactyl ether bond of MurNAc 6-phosphate, with the formation of an alpha,beta-unsaturated aldehyde intermediate with (E)-stereochemistry, followed by the syn addition of water to give product.</text>
</comment>
<comment type="similarity">
    <text evidence="1">Belongs to the GCKR-like family. MurNAc-6-P etherase subfamily.</text>
</comment>
<gene>
    <name evidence="1" type="primary">murQ</name>
    <name type="ordered locus">YPTS_2994</name>
</gene>
<dbReference type="EC" id="4.2.1.126" evidence="1"/>
<dbReference type="EMBL" id="CP001048">
    <property type="protein sequence ID" value="ACC89951.1"/>
    <property type="molecule type" value="Genomic_DNA"/>
</dbReference>
<dbReference type="RefSeq" id="WP_002211565.1">
    <property type="nucleotide sequence ID" value="NZ_CP009780.1"/>
</dbReference>
<dbReference type="SMR" id="B2KA40"/>
<dbReference type="GeneID" id="57975879"/>
<dbReference type="KEGG" id="ypb:YPTS_2994"/>
<dbReference type="PATRIC" id="fig|502801.10.peg.2425"/>
<dbReference type="UniPathway" id="UPA00342"/>
<dbReference type="UniPathway" id="UPA00343"/>
<dbReference type="UniPathway" id="UPA00544"/>
<dbReference type="GO" id="GO:0097367">
    <property type="term" value="F:carbohydrate derivative binding"/>
    <property type="evidence" value="ECO:0007669"/>
    <property type="project" value="InterPro"/>
</dbReference>
<dbReference type="GO" id="GO:0016835">
    <property type="term" value="F:carbon-oxygen lyase activity"/>
    <property type="evidence" value="ECO:0007669"/>
    <property type="project" value="UniProtKB-UniRule"/>
</dbReference>
<dbReference type="GO" id="GO:0016803">
    <property type="term" value="F:ether hydrolase activity"/>
    <property type="evidence" value="ECO:0007669"/>
    <property type="project" value="TreeGrafter"/>
</dbReference>
<dbReference type="GO" id="GO:0097175">
    <property type="term" value="P:1,6-anhydro-N-acetyl-beta-muramic acid catabolic process"/>
    <property type="evidence" value="ECO:0007669"/>
    <property type="project" value="UniProtKB-UniRule"/>
</dbReference>
<dbReference type="GO" id="GO:0046348">
    <property type="term" value="P:amino sugar catabolic process"/>
    <property type="evidence" value="ECO:0007669"/>
    <property type="project" value="InterPro"/>
</dbReference>
<dbReference type="GO" id="GO:0097173">
    <property type="term" value="P:N-acetylmuramic acid catabolic process"/>
    <property type="evidence" value="ECO:0007669"/>
    <property type="project" value="UniProtKB-UniPathway"/>
</dbReference>
<dbReference type="GO" id="GO:0009254">
    <property type="term" value="P:peptidoglycan turnover"/>
    <property type="evidence" value="ECO:0007669"/>
    <property type="project" value="UniProtKB-UniRule"/>
</dbReference>
<dbReference type="CDD" id="cd05007">
    <property type="entry name" value="SIS_Etherase"/>
    <property type="match status" value="1"/>
</dbReference>
<dbReference type="FunFam" id="1.10.8.1080:FF:000001">
    <property type="entry name" value="N-acetylmuramic acid 6-phosphate etherase"/>
    <property type="match status" value="1"/>
</dbReference>
<dbReference type="FunFam" id="3.40.50.10490:FF:000014">
    <property type="entry name" value="N-acetylmuramic acid 6-phosphate etherase"/>
    <property type="match status" value="1"/>
</dbReference>
<dbReference type="Gene3D" id="1.10.8.1080">
    <property type="match status" value="1"/>
</dbReference>
<dbReference type="Gene3D" id="3.40.50.10490">
    <property type="entry name" value="Glucose-6-phosphate isomerase like protein, domain 1"/>
    <property type="match status" value="1"/>
</dbReference>
<dbReference type="HAMAP" id="MF_00068">
    <property type="entry name" value="MurQ"/>
    <property type="match status" value="1"/>
</dbReference>
<dbReference type="InterPro" id="IPR005488">
    <property type="entry name" value="Etherase_MurQ"/>
</dbReference>
<dbReference type="InterPro" id="IPR005486">
    <property type="entry name" value="Glucokinase_regulatory_CS"/>
</dbReference>
<dbReference type="InterPro" id="IPR040190">
    <property type="entry name" value="MURQ/GCKR"/>
</dbReference>
<dbReference type="InterPro" id="IPR001347">
    <property type="entry name" value="SIS_dom"/>
</dbReference>
<dbReference type="InterPro" id="IPR046348">
    <property type="entry name" value="SIS_dom_sf"/>
</dbReference>
<dbReference type="InterPro" id="IPR009060">
    <property type="entry name" value="UBA-like_sf"/>
</dbReference>
<dbReference type="NCBIfam" id="TIGR00274">
    <property type="entry name" value="N-acetylmuramic acid 6-phosphate etherase"/>
    <property type="match status" value="1"/>
</dbReference>
<dbReference type="NCBIfam" id="NF003915">
    <property type="entry name" value="PRK05441.1"/>
    <property type="match status" value="1"/>
</dbReference>
<dbReference type="NCBIfam" id="NF009222">
    <property type="entry name" value="PRK12570.1"/>
    <property type="match status" value="1"/>
</dbReference>
<dbReference type="PANTHER" id="PTHR10088">
    <property type="entry name" value="GLUCOKINASE REGULATORY PROTEIN"/>
    <property type="match status" value="1"/>
</dbReference>
<dbReference type="PANTHER" id="PTHR10088:SF5">
    <property type="entry name" value="N-ACETYLMURAMIC ACID 6-PHOSPHATE ETHERASE"/>
    <property type="match status" value="1"/>
</dbReference>
<dbReference type="Pfam" id="PF20741">
    <property type="entry name" value="GKRP-like_C"/>
    <property type="match status" value="1"/>
</dbReference>
<dbReference type="Pfam" id="PF22645">
    <property type="entry name" value="GKRP_SIS_N"/>
    <property type="match status" value="1"/>
</dbReference>
<dbReference type="SUPFAM" id="SSF53697">
    <property type="entry name" value="SIS domain"/>
    <property type="match status" value="1"/>
</dbReference>
<dbReference type="SUPFAM" id="SSF46934">
    <property type="entry name" value="UBA-like"/>
    <property type="match status" value="1"/>
</dbReference>
<dbReference type="PROSITE" id="PS01272">
    <property type="entry name" value="GCKR"/>
    <property type="match status" value="1"/>
</dbReference>
<dbReference type="PROSITE" id="PS51464">
    <property type="entry name" value="SIS"/>
    <property type="match status" value="1"/>
</dbReference>